<evidence type="ECO:0000255" key="1">
    <source>
        <dbReference type="HAMAP-Rule" id="MF_00185"/>
    </source>
</evidence>
<dbReference type="EC" id="2.5.1.75" evidence="1"/>
<dbReference type="EMBL" id="BA000021">
    <property type="protein sequence ID" value="BAC24329.1"/>
    <property type="molecule type" value="Genomic_DNA"/>
</dbReference>
<dbReference type="SMR" id="Q8D318"/>
<dbReference type="STRING" id="36870.gene:10368671"/>
<dbReference type="KEGG" id="wbr:miaA"/>
<dbReference type="eggNOG" id="COG0324">
    <property type="taxonomic scope" value="Bacteria"/>
</dbReference>
<dbReference type="HOGENOM" id="CLU_032616_0_0_6"/>
<dbReference type="OrthoDB" id="9776390at2"/>
<dbReference type="Proteomes" id="UP000000562">
    <property type="component" value="Chromosome"/>
</dbReference>
<dbReference type="GO" id="GO:0005524">
    <property type="term" value="F:ATP binding"/>
    <property type="evidence" value="ECO:0007669"/>
    <property type="project" value="UniProtKB-UniRule"/>
</dbReference>
<dbReference type="GO" id="GO:0052381">
    <property type="term" value="F:tRNA dimethylallyltransferase activity"/>
    <property type="evidence" value="ECO:0007669"/>
    <property type="project" value="UniProtKB-UniRule"/>
</dbReference>
<dbReference type="GO" id="GO:0006400">
    <property type="term" value="P:tRNA modification"/>
    <property type="evidence" value="ECO:0007669"/>
    <property type="project" value="TreeGrafter"/>
</dbReference>
<dbReference type="CDD" id="cd02019">
    <property type="entry name" value="NK"/>
    <property type="match status" value="1"/>
</dbReference>
<dbReference type="Gene3D" id="1.10.20.140">
    <property type="match status" value="1"/>
</dbReference>
<dbReference type="Gene3D" id="3.40.50.300">
    <property type="entry name" value="P-loop containing nucleotide triphosphate hydrolases"/>
    <property type="match status" value="1"/>
</dbReference>
<dbReference type="HAMAP" id="MF_00185">
    <property type="entry name" value="IPP_trans"/>
    <property type="match status" value="1"/>
</dbReference>
<dbReference type="InterPro" id="IPR039657">
    <property type="entry name" value="Dimethylallyltransferase"/>
</dbReference>
<dbReference type="InterPro" id="IPR018022">
    <property type="entry name" value="IPT"/>
</dbReference>
<dbReference type="InterPro" id="IPR027417">
    <property type="entry name" value="P-loop_NTPase"/>
</dbReference>
<dbReference type="NCBIfam" id="TIGR00174">
    <property type="entry name" value="miaA"/>
    <property type="match status" value="1"/>
</dbReference>
<dbReference type="PANTHER" id="PTHR11088">
    <property type="entry name" value="TRNA DIMETHYLALLYLTRANSFERASE"/>
    <property type="match status" value="1"/>
</dbReference>
<dbReference type="PANTHER" id="PTHR11088:SF60">
    <property type="entry name" value="TRNA DIMETHYLALLYLTRANSFERASE"/>
    <property type="match status" value="1"/>
</dbReference>
<dbReference type="Pfam" id="PF01715">
    <property type="entry name" value="IPPT"/>
    <property type="match status" value="1"/>
</dbReference>
<dbReference type="SUPFAM" id="SSF52540">
    <property type="entry name" value="P-loop containing nucleoside triphosphate hydrolases"/>
    <property type="match status" value="1"/>
</dbReference>
<name>MIAA_WIGBR</name>
<accession>Q8D318</accession>
<gene>
    <name evidence="1" type="primary">miaA</name>
    <name type="ordered locus">WIGBR1830</name>
</gene>
<feature type="chain" id="PRO_0000164006" description="tRNA dimethylallyltransferase">
    <location>
        <begin position="1"/>
        <end position="322"/>
    </location>
</feature>
<feature type="region of interest" description="Interaction with substrate tRNA" evidence="1">
    <location>
        <begin position="46"/>
        <end position="49"/>
    </location>
</feature>
<feature type="binding site" evidence="1">
    <location>
        <begin position="21"/>
        <end position="28"/>
    </location>
    <ligand>
        <name>ATP</name>
        <dbReference type="ChEBI" id="CHEBI:30616"/>
    </ligand>
</feature>
<feature type="binding site" evidence="1">
    <location>
        <begin position="23"/>
        <end position="28"/>
    </location>
    <ligand>
        <name>substrate</name>
    </ligand>
</feature>
<feature type="site" description="Interaction with substrate tRNA" evidence="1">
    <location>
        <position position="112"/>
    </location>
</feature>
<keyword id="KW-0067">ATP-binding</keyword>
<keyword id="KW-0460">Magnesium</keyword>
<keyword id="KW-0547">Nucleotide-binding</keyword>
<keyword id="KW-1185">Reference proteome</keyword>
<keyword id="KW-0808">Transferase</keyword>
<keyword id="KW-0819">tRNA processing</keyword>
<protein>
    <recommendedName>
        <fullName evidence="1">tRNA dimethylallyltransferase</fullName>
        <ecNumber evidence="1">2.5.1.75</ecNumber>
    </recommendedName>
    <alternativeName>
        <fullName evidence="1">Dimethylallyl diphosphate:tRNA dimethylallyltransferase</fullName>
        <shortName evidence="1">DMAPP:tRNA dimethylallyltransferase</shortName>
        <shortName evidence="1">DMATase</shortName>
    </alternativeName>
    <alternativeName>
        <fullName evidence="1">Isopentenyl-diphosphate:tRNA isopentenyltransferase</fullName>
        <shortName evidence="1">IPP transferase</shortName>
        <shortName evidence="1">IPPT</shortName>
        <shortName evidence="1">IPTase</shortName>
    </alternativeName>
</protein>
<sequence>MNENKCTDKINNLPKAIFIMGQTAVGKTKIAEILKKKLPVEIISVDSGCIYKGMNIGTDKPNVKKSSSDKYHLIDICEPNDYYSVENFRLDALKIMEKISKKGLIPLLVGGSMFYFKSLLHGLSNLPSYNIENKNLLKKKINEIGWYKSYIFLKKIDPIFASNIHPNDHYRLTRALEIYFSSGNIPTNLFKAKTKKLEYNIRQFSIMISDKKILYKKIKDRFFNMLKNGFKKEVEFLKNKKQINKNMPSMRCIGYKQMLAYLSGEINYKEMILFTISATNKLAKKQSTWLKKWKNINYIYNKDVYISSEEIFNILKKDNFID</sequence>
<organism>
    <name type="scientific">Wigglesworthia glossinidia brevipalpis</name>
    <dbReference type="NCBI Taxonomy" id="36870"/>
    <lineage>
        <taxon>Bacteria</taxon>
        <taxon>Pseudomonadati</taxon>
        <taxon>Pseudomonadota</taxon>
        <taxon>Gammaproteobacteria</taxon>
        <taxon>Enterobacterales</taxon>
        <taxon>Erwiniaceae</taxon>
        <taxon>Wigglesworthia</taxon>
    </lineage>
</organism>
<comment type="function">
    <text evidence="1">Catalyzes the transfer of a dimethylallyl group onto the adenine at position 37 in tRNAs that read codons beginning with uridine, leading to the formation of N6-(dimethylallyl)adenosine (i(6)A).</text>
</comment>
<comment type="catalytic activity">
    <reaction evidence="1">
        <text>adenosine(37) in tRNA + dimethylallyl diphosphate = N(6)-dimethylallyladenosine(37) in tRNA + diphosphate</text>
        <dbReference type="Rhea" id="RHEA:26482"/>
        <dbReference type="Rhea" id="RHEA-COMP:10162"/>
        <dbReference type="Rhea" id="RHEA-COMP:10375"/>
        <dbReference type="ChEBI" id="CHEBI:33019"/>
        <dbReference type="ChEBI" id="CHEBI:57623"/>
        <dbReference type="ChEBI" id="CHEBI:74411"/>
        <dbReference type="ChEBI" id="CHEBI:74415"/>
        <dbReference type="EC" id="2.5.1.75"/>
    </reaction>
</comment>
<comment type="cofactor">
    <cofactor evidence="1">
        <name>Mg(2+)</name>
        <dbReference type="ChEBI" id="CHEBI:18420"/>
    </cofactor>
</comment>
<comment type="subunit">
    <text evidence="1">Monomer.</text>
</comment>
<comment type="similarity">
    <text evidence="1">Belongs to the IPP transferase family.</text>
</comment>
<reference key="1">
    <citation type="journal article" date="2002" name="Nat. Genet.">
        <title>Genome sequence of the endocellular obligate symbiont of tsetse flies, Wigglesworthia glossinidia.</title>
        <authorList>
            <person name="Akman L."/>
            <person name="Yamashita A."/>
            <person name="Watanabe H."/>
            <person name="Oshima K."/>
            <person name="Shiba T."/>
            <person name="Hattori M."/>
            <person name="Aksoy S."/>
        </authorList>
    </citation>
    <scope>NUCLEOTIDE SEQUENCE [LARGE SCALE GENOMIC DNA]</scope>
</reference>
<proteinExistence type="inferred from homology"/>